<accession>A0A023W0U0</accession>
<evidence type="ECO:0000250" key="1">
    <source>
        <dbReference type="UniProtKB" id="A0A023VZM6"/>
    </source>
</evidence>
<evidence type="ECO:0000255" key="2"/>
<evidence type="ECO:0000269" key="3">
    <source>
    </source>
</evidence>
<evidence type="ECO:0000303" key="4">
    <source>
    </source>
</evidence>
<evidence type="ECO:0000305" key="5"/>
<evidence type="ECO:0000305" key="6">
    <source>
    </source>
</evidence>
<evidence type="ECO:0000312" key="7">
    <source>
        <dbReference type="EMBL" id="AHY22584.1"/>
    </source>
</evidence>
<sequence>MTRHLIFAAMLLVCLFVCWNAVGARDARSAFSLEETAQDEHVMEERIFINPAGNREKNACLENCRSSPNCENYEFCSK</sequence>
<proteinExistence type="evidence at protein level"/>
<dbReference type="EMBL" id="KF130733">
    <property type="protein sequence ID" value="AHY22584.1"/>
    <property type="molecule type" value="mRNA"/>
</dbReference>
<dbReference type="GO" id="GO:0005576">
    <property type="term" value="C:extracellular region"/>
    <property type="evidence" value="ECO:0007669"/>
    <property type="project" value="UniProtKB-SubCell"/>
</dbReference>
<dbReference type="GO" id="GO:0090729">
    <property type="term" value="F:toxin activity"/>
    <property type="evidence" value="ECO:0007669"/>
    <property type="project" value="UniProtKB-KW"/>
</dbReference>
<reference key="1">
    <citation type="journal article" date="2014" name="J. Proteomics">
        <title>Multifunctional warheads: diversification of the toxin arsenal of centipedes via novel multidomain transcripts.</title>
        <authorList>
            <person name="Undheim E.A."/>
            <person name="Sunagar K."/>
            <person name="Hamilton B.R."/>
            <person name="Jones A."/>
            <person name="Venter D.J."/>
            <person name="Fry B.G."/>
            <person name="King G.F."/>
        </authorList>
    </citation>
    <scope>NUCLEOTIDE SEQUENCE [MRNA]</scope>
    <scope>PROTEIN SEQUENCE OF 47-77</scope>
    <scope>IDENTIFICATION BY MASS SPECTROMETRY</scope>
    <scope>SUBCELLULAR LOCATION</scope>
    <source>
        <tissue>Venom</tissue>
        <tissue>Venom gland</tissue>
    </source>
</reference>
<comment type="subcellular location">
    <subcellularLocation>
        <location evidence="3">Secreted</location>
    </subcellularLocation>
    <text evidence="3">The mature toxins are clearly liberated from the multidomain precursors in the venom gland prior to venom expulsion and not by venom proteases upon secretion.</text>
</comment>
<comment type="tissue specificity">
    <text evidence="6">Expressed by the venom gland.</text>
</comment>
<comment type="PTM">
    <text evidence="5">Contains 2 disulfide bonds.</text>
</comment>
<comment type="similarity">
    <text evidence="5">Belongs to the scoloptoxin-04 family.</text>
</comment>
<name>TX41D_ETHRU</name>
<protein>
    <recommendedName>
        <fullName evidence="5">U-scoloptoxin(04)-Er1d</fullName>
        <shortName evidence="5">U-SLPTX(04)-Er1d</shortName>
    </recommendedName>
    <alternativeName>
        <fullName evidence="7">U-scoloptoxin-Er1.1b2c</fullName>
        <shortName evidence="7">U-SLPTX-Er1.1b2c</shortName>
    </alternativeName>
    <component>
        <recommendedName>
            <fullName evidence="4">U-scoloptoxin-Er1.1b</fullName>
        </recommendedName>
    </component>
    <component>
        <recommendedName>
            <fullName evidence="4">U-scoloptoxin-Er1.2c</fullName>
        </recommendedName>
    </component>
</protein>
<feature type="signal peptide" evidence="2">
    <location>
        <begin position="1"/>
        <end position="24"/>
    </location>
</feature>
<feature type="propeptide" id="PRO_0000446703" evidence="5">
    <location>
        <begin position="25"/>
        <end position="28"/>
    </location>
</feature>
<feature type="peptide" id="PRO_5001525378" description="U-scoloptoxin-Er1.1b" evidence="1">
    <location>
        <begin position="29"/>
        <end position="46"/>
    </location>
</feature>
<feature type="chain" id="PRO_0000446704" description="U-scoloptoxin-Er1.2c" evidence="1">
    <location>
        <begin position="47"/>
        <end position="77"/>
    </location>
</feature>
<organism>
    <name type="scientific">Ethmostigmus rubripes</name>
    <name type="common">Giant centipede</name>
    <dbReference type="NCBI Taxonomy" id="62613"/>
    <lineage>
        <taxon>Eukaryota</taxon>
        <taxon>Metazoa</taxon>
        <taxon>Ecdysozoa</taxon>
        <taxon>Arthropoda</taxon>
        <taxon>Myriapoda</taxon>
        <taxon>Chilopoda</taxon>
        <taxon>Pleurostigmophora</taxon>
        <taxon>Scolopendromorpha</taxon>
        <taxon>Scolopendridae</taxon>
        <taxon>Ethmostigmus</taxon>
    </lineage>
</organism>
<keyword id="KW-0903">Direct protein sequencing</keyword>
<keyword id="KW-1015">Disulfide bond</keyword>
<keyword id="KW-0964">Secreted</keyword>
<keyword id="KW-0732">Signal</keyword>
<keyword id="KW-0800">Toxin</keyword>